<comment type="function">
    <text evidence="2 3">UDP-glucose-dependent glucosyltransferase catalyzing the C-glucosylation of 2-hydroxyflavanones (2-hydroxynaringenin, 2-hydroxyeriodictyol and 2-hydroxypinocembrin) and phloretin (PubMed:25142187). No activity with flavanones, flavones or flavonols (PubMed:25142187). Exhibits C-glycosylation activity toward 2',4',6'-trihydroxyacetophenone and phloretin using UDP-glucose as sugar donor (PubMed:32699169). Can use UDP-galactose as sugar donor, but catalytic efficiency is 14-fold lower toward UDP-galactose than toward UDP-glucose (PubMed:32699169).</text>
</comment>
<comment type="catalytic activity">
    <reaction evidence="2 3">
        <text>a 3'-hydro-2'-hydroxy-beta-oxodihydrochalcone + UDP-alpha-D-glucose = a 3'-(beta-D-glucopyranosyl)-2'-hydroxy-beta-oxodihydrochalcone + UDP + H(+)</text>
        <dbReference type="Rhea" id="RHEA:51504"/>
        <dbReference type="ChEBI" id="CHEBI:15378"/>
        <dbReference type="ChEBI" id="CHEBI:58223"/>
        <dbReference type="ChEBI" id="CHEBI:58885"/>
        <dbReference type="ChEBI" id="CHEBI:142482"/>
        <dbReference type="ChEBI" id="CHEBI:142483"/>
        <dbReference type="EC" id="2.4.1.360"/>
    </reaction>
    <physiologicalReaction direction="left-to-right" evidence="2 3">
        <dbReference type="Rhea" id="RHEA:51505"/>
    </physiologicalReaction>
</comment>
<comment type="biophysicochemical properties">
    <kinetics>
        <KM evidence="2">4.4 uM for 2-hydroxynaringenin</KM>
        <KM evidence="2">40 uM for 2-hydroxypinocembrin</KM>
        <KM evidence="2">36.5 uM for 2-phenyl-2',4',6'-trihydroxyactophenone</KM>
        <KM evidence="3">3.73 uM for phloretin</KM>
        <KM evidence="3">14.66 uM for 2',4',6'-trihydroxyacetophenone</KM>
        <KM evidence="2">58.1 uM for UDP-glucose with 2-hydroxypinocembrin as acceptor</KM>
        <KM evidence="3">56.95 uM for UDP-glucose with phloretin as acceptor</KM>
        <KM evidence="3">42.55 uM for UDP-glucose with 2',4',6'-trihydroxyacetophenone as acceptor</KM>
    </kinetics>
    <phDependence>
        <text evidence="2">Optimum pH is 6.5-7.0.</text>
    </phDependence>
    <temperatureDependence>
        <text evidence="2">Optimum temperature is 45-50 degrees Celsius.</text>
    </temperatureDependence>
</comment>
<comment type="tissue specificity">
    <text evidence="2">Expressed in cotyledons. Not detected in flowers, leaves, roots and hypocotyls.</text>
</comment>
<comment type="developmental stage">
    <text evidence="2">Expressed in germinating seeds and during cotyledon development.</text>
</comment>
<comment type="similarity">
    <text evidence="5">Belongs to the UDP-glycosyltransferase family.</text>
</comment>
<sequence>MMGDLTTSFPATTLTTNDQPHVVVCSGAGMGHLTPFLNLASALSSAPYNCKVTLLIVIPLITDAESHHISSFFSSHPTIHRLDFHVNLPAPKPNVDPFFLRYKSISDSAHRLPVHLSALSPPISAVFSDFLFTQGLNTTLPHLPNYTFTTTSARFFTLMSYVPHLAKSSSSSPVEIPGLEPFPTDNIPPPFFNPEHIFTSFTISNAKYFSLSKGILVNTFDSFEPETLSALNSGDTLSDLPPVIPIGPLNELEHNKQEELLPWLDQQPEKSVLYVSFGNRTAMSSDQILELGMGLERSDCRFIWVVKTSKIDKDDKSELRKLFGEELYLKLSEKGKLVKWVNQTEILGHTAVGGFLSHCGWNSVMEAARRGVPILAWPQHGDQRENAWVVEKAGLGVWEREWASGIQAAIVEKVKMIMGNNDLRKSAMKVGEEAKRACDVGGSSATALMNIIGSLKR</sequence>
<protein>
    <recommendedName>
        <fullName evidence="4">UDP-glycosyltransferase 708C1</fullName>
        <ecNumber evidence="2 3">2.4.1.360</ecNumber>
    </recommendedName>
    <alternativeName>
        <fullName evidence="4">C-glucosyltransferase a</fullName>
        <shortName evidence="4">FeCGTa</shortName>
    </alternativeName>
    <alternativeName>
        <fullName evidence="5">UDP-glucose:2-hydroxyflavanone C-glucosyltransferase</fullName>
    </alternativeName>
</protein>
<dbReference type="EC" id="2.4.1.360" evidence="2 3"/>
<dbReference type="EMBL" id="AB909375">
    <property type="protein sequence ID" value="BAP90360.1"/>
    <property type="molecule type" value="mRNA"/>
</dbReference>
<dbReference type="PDB" id="6LLG">
    <property type="method" value="X-ray"/>
    <property type="resolution" value="2.10 A"/>
    <property type="chains" value="A/B=1-457"/>
</dbReference>
<dbReference type="PDB" id="6LLW">
    <property type="method" value="X-ray"/>
    <property type="resolution" value="2.26 A"/>
    <property type="chains" value="A/B=1-457"/>
</dbReference>
<dbReference type="PDB" id="6LLZ">
    <property type="method" value="X-ray"/>
    <property type="resolution" value="2.01 A"/>
    <property type="chains" value="A/B=1-457"/>
</dbReference>
<dbReference type="PDB" id="7CYW">
    <property type="method" value="X-ray"/>
    <property type="resolution" value="1.80 A"/>
    <property type="chains" value="A=17-457"/>
</dbReference>
<dbReference type="PDBsum" id="6LLG"/>
<dbReference type="PDBsum" id="6LLW"/>
<dbReference type="PDBsum" id="6LLZ"/>
<dbReference type="PDBsum" id="7CYW"/>
<dbReference type="SMR" id="A0A0A1HA03"/>
<dbReference type="KEGG" id="ag:BAP90360"/>
<dbReference type="BioCyc" id="MetaCyc:MONOMER-17888"/>
<dbReference type="BRENDA" id="2.4.1.360">
    <property type="organism ID" value="2227"/>
</dbReference>
<dbReference type="GO" id="GO:0120514">
    <property type="term" value="F:2-hydroxyflavanone C-glucosyltransferase activity"/>
    <property type="evidence" value="ECO:0007669"/>
    <property type="project" value="UniProtKB-EC"/>
</dbReference>
<dbReference type="GO" id="GO:0035251">
    <property type="term" value="F:UDP-glucosyltransferase activity"/>
    <property type="evidence" value="ECO:0000314"/>
    <property type="project" value="UniProtKB"/>
</dbReference>
<dbReference type="CDD" id="cd03784">
    <property type="entry name" value="GT1_Gtf-like"/>
    <property type="match status" value="1"/>
</dbReference>
<dbReference type="FunFam" id="3.40.50.2000:FF:000060">
    <property type="entry name" value="Glycosyltransferase"/>
    <property type="match status" value="1"/>
</dbReference>
<dbReference type="Gene3D" id="3.40.50.2000">
    <property type="entry name" value="Glycogen Phosphorylase B"/>
    <property type="match status" value="2"/>
</dbReference>
<dbReference type="InterPro" id="IPR050481">
    <property type="entry name" value="UDP-glycosyltransf_plant"/>
</dbReference>
<dbReference type="InterPro" id="IPR002213">
    <property type="entry name" value="UDP_glucos_trans"/>
</dbReference>
<dbReference type="InterPro" id="IPR035595">
    <property type="entry name" value="UDP_glycos_trans_CS"/>
</dbReference>
<dbReference type="PANTHER" id="PTHR48048">
    <property type="entry name" value="GLYCOSYLTRANSFERASE"/>
    <property type="match status" value="1"/>
</dbReference>
<dbReference type="PANTHER" id="PTHR48048:SF76">
    <property type="entry name" value="UDP-GLYCOSYLTRANSFERASE 708D1-LIKE"/>
    <property type="match status" value="1"/>
</dbReference>
<dbReference type="Pfam" id="PF00201">
    <property type="entry name" value="UDPGT"/>
    <property type="match status" value="1"/>
</dbReference>
<dbReference type="SUPFAM" id="SSF53756">
    <property type="entry name" value="UDP-Glycosyltransferase/glycogen phosphorylase"/>
    <property type="match status" value="1"/>
</dbReference>
<dbReference type="PROSITE" id="PS00375">
    <property type="entry name" value="UDPGT"/>
    <property type="match status" value="1"/>
</dbReference>
<keyword id="KW-0002">3D-structure</keyword>
<keyword id="KW-0903">Direct protein sequencing</keyword>
<keyword id="KW-0328">Glycosyltransferase</keyword>
<keyword id="KW-0808">Transferase</keyword>
<reference key="1">
    <citation type="journal article" date="2014" name="Plant J.">
        <title>Purification, molecular cloning and functional characterization of flavonoid C-glucosyltransferases from Fagopyrum esculentum M. (buckwheat) cotyledon.</title>
        <authorList>
            <person name="Nagatomo Y."/>
            <person name="Usui S."/>
            <person name="Ito T."/>
            <person name="Kato A."/>
            <person name="Shimosaka M."/>
            <person name="Taguchi G."/>
        </authorList>
    </citation>
    <scope>NUCLEOTIDE SEQUENCE [MRNA]</scope>
    <scope>PROTEIN SEQUENCE OF 93-103; 197-213; 257-270; 322-330; 393-413 AND 416-425</scope>
    <scope>FUNCTION</scope>
    <scope>CATALYTIC ACTIVITY</scope>
    <scope>BIOPHYSICOCHEMICAL PROPERTIES</scope>
    <scope>TISSUE SPECIFICITY</scope>
    <scope>DEVELOPMENTAL STAGE</scope>
</reference>
<reference key="2">
    <citation type="journal article" date="2020" name="Plant Cell">
        <title>Crystal structures of the c-glycosyltransferase UGT708C1 from buckwheat provide insights into the mechanism of C-glycosylation.</title>
        <authorList>
            <person name="Liu M."/>
            <person name="Wang D."/>
            <person name="Li Y."/>
            <person name="Li X."/>
            <person name="Zong G."/>
            <person name="Fei S."/>
            <person name="Yang X."/>
            <person name="Lin J."/>
            <person name="Wang X."/>
            <person name="Shen Y."/>
        </authorList>
    </citation>
    <scope>X-RAY CRYSTALLOGRAPHY (2.01 ANGSTROMS) IN COMPLEXES WITH UDP-GLUCOSE AND UDP</scope>
    <scope>FUNCTION</scope>
    <scope>CATALYTIC ACTIVITY</scope>
    <scope>BIOPHYSICOCHEMICAL PROPERTIES</scope>
    <scope>ACTIVE SITE</scope>
    <scope>MUTAGENESIS OF TYR-102; PHE-130; THR-150; THR-151; PHE-198; ASP-382 AND GLN-383</scope>
</reference>
<reference key="3">
    <citation type="submission" date="2020-09" db="PDB data bank">
        <title>Crystal structure of a flavonoid C-glucosyltrasferase from Fagopyrum esculentum.</title>
        <authorList>
            <person name="Koyanagi Y."/>
            <person name="Arai R."/>
            <person name="Taguchi G."/>
        </authorList>
    </citation>
    <scope>X-RAY CRYSTALLOGRAPHY (1.80 ANGSTROMS) OF 17-457</scope>
</reference>
<accession>A0A0A1HA03</accession>
<name>708C1_FAGES</name>
<organism evidence="7">
    <name type="scientific">Fagopyrum esculentum</name>
    <name type="common">Common buckwheat</name>
    <name type="synonym">Polygonum fagopyrum</name>
    <dbReference type="NCBI Taxonomy" id="3617"/>
    <lineage>
        <taxon>Eukaryota</taxon>
        <taxon>Viridiplantae</taxon>
        <taxon>Streptophyta</taxon>
        <taxon>Embryophyta</taxon>
        <taxon>Tracheophyta</taxon>
        <taxon>Spermatophyta</taxon>
        <taxon>Magnoliopsida</taxon>
        <taxon>eudicotyledons</taxon>
        <taxon>Gunneridae</taxon>
        <taxon>Pentapetalae</taxon>
        <taxon>Caryophyllales</taxon>
        <taxon>Polygonaceae</taxon>
        <taxon>Polygonoideae</taxon>
        <taxon>Fagopyreae</taxon>
        <taxon>Fagopyrum</taxon>
    </lineage>
</organism>
<gene>
    <name evidence="4" type="primary">UGT708C1</name>
    <name evidence="4" type="synonym">CGTa</name>
</gene>
<proteinExistence type="evidence at protein level"/>
<evidence type="ECO:0000250" key="1">
    <source>
        <dbReference type="UniProtKB" id="P51094"/>
    </source>
</evidence>
<evidence type="ECO:0000269" key="2">
    <source>
    </source>
</evidence>
<evidence type="ECO:0000269" key="3">
    <source>
    </source>
</evidence>
<evidence type="ECO:0000303" key="4">
    <source>
    </source>
</evidence>
<evidence type="ECO:0000305" key="5"/>
<evidence type="ECO:0000305" key="6">
    <source>
    </source>
</evidence>
<evidence type="ECO:0000312" key="7">
    <source>
        <dbReference type="EMBL" id="BAP90360.1"/>
    </source>
</evidence>
<evidence type="ECO:0007744" key="8">
    <source>
        <dbReference type="PDB" id="6LLW"/>
    </source>
</evidence>
<evidence type="ECO:0007744" key="9">
    <source>
        <dbReference type="PDB" id="6LLZ"/>
    </source>
</evidence>
<evidence type="ECO:0007829" key="10">
    <source>
        <dbReference type="PDB" id="6LLG"/>
    </source>
</evidence>
<evidence type="ECO:0007829" key="11">
    <source>
        <dbReference type="PDB" id="7CYW"/>
    </source>
</evidence>
<feature type="chain" id="PRO_0000436254" description="UDP-glycosyltransferase 708C1">
    <location>
        <begin position="1"/>
        <end position="457"/>
    </location>
</feature>
<feature type="region of interest" description="UDP" evidence="3 8">
    <location>
        <begin position="279"/>
        <end position="280"/>
    </location>
</feature>
<feature type="active site" description="Proton acceptor" evidence="6">
    <location>
        <position position="32"/>
    </location>
</feature>
<feature type="active site" description="Charge relay" evidence="6">
    <location>
        <position position="129"/>
    </location>
</feature>
<feature type="binding site" evidence="3 9">
    <location>
        <position position="31"/>
    </location>
    <ligand>
        <name>UDP-alpha-D-glucose</name>
        <dbReference type="ChEBI" id="CHEBI:58885"/>
    </ligand>
</feature>
<feature type="binding site" evidence="1">
    <location>
        <position position="32"/>
    </location>
    <ligand>
        <name>an anthocyanidin</name>
        <dbReference type="ChEBI" id="CHEBI:143576"/>
    </ligand>
</feature>
<feature type="binding site" evidence="3 9">
    <location>
        <position position="34"/>
    </location>
    <ligand>
        <name>UDP-alpha-D-glucose</name>
        <dbReference type="ChEBI" id="CHEBI:58885"/>
    </ligand>
</feature>
<feature type="binding site" evidence="1">
    <location>
        <position position="94"/>
    </location>
    <ligand>
        <name>an anthocyanidin</name>
        <dbReference type="ChEBI" id="CHEBI:143576"/>
    </ligand>
</feature>
<feature type="binding site" evidence="3 9">
    <location>
        <position position="150"/>
    </location>
    <ligand>
        <name>UDP-alpha-D-glucose</name>
        <dbReference type="ChEBI" id="CHEBI:58885"/>
    </ligand>
</feature>
<feature type="binding site" evidence="3 9">
    <location>
        <position position="341"/>
    </location>
    <ligand>
        <name>UDP-alpha-D-glucose</name>
        <dbReference type="ChEBI" id="CHEBI:58885"/>
    </ligand>
</feature>
<feature type="binding site" evidence="3 9">
    <location>
        <position position="343"/>
    </location>
    <ligand>
        <name>UDP-alpha-D-glucose</name>
        <dbReference type="ChEBI" id="CHEBI:58885"/>
    </ligand>
</feature>
<feature type="binding site" evidence="3 9">
    <location>
        <position position="358"/>
    </location>
    <ligand>
        <name>UDP-alpha-D-glucose</name>
        <dbReference type="ChEBI" id="CHEBI:58885"/>
    </ligand>
</feature>
<feature type="binding site" evidence="3 9">
    <location>
        <position position="361"/>
    </location>
    <ligand>
        <name>UDP-alpha-D-glucose</name>
        <dbReference type="ChEBI" id="CHEBI:58885"/>
    </ligand>
</feature>
<feature type="binding site" evidence="3 9">
    <location>
        <position position="362"/>
    </location>
    <ligand>
        <name>UDP-alpha-D-glucose</name>
        <dbReference type="ChEBI" id="CHEBI:58885"/>
    </ligand>
</feature>
<feature type="binding site" evidence="3 9">
    <location>
        <position position="363"/>
    </location>
    <ligand>
        <name>UDP-alpha-D-glucose</name>
        <dbReference type="ChEBI" id="CHEBI:58885"/>
    </ligand>
</feature>
<feature type="binding site" evidence="3 9">
    <location>
        <position position="366"/>
    </location>
    <ligand>
        <name>UDP-alpha-D-glucose</name>
        <dbReference type="ChEBI" id="CHEBI:58885"/>
    </ligand>
</feature>
<feature type="binding site" evidence="1">
    <location>
        <position position="381"/>
    </location>
    <ligand>
        <name>an anthocyanidin</name>
        <dbReference type="ChEBI" id="CHEBI:143576"/>
    </ligand>
</feature>
<feature type="binding site" evidence="3 9">
    <location>
        <position position="382"/>
    </location>
    <ligand>
        <name>UDP-alpha-D-glucose</name>
        <dbReference type="ChEBI" id="CHEBI:58885"/>
    </ligand>
</feature>
<feature type="binding site" evidence="3 9">
    <location>
        <position position="383"/>
    </location>
    <ligand>
        <name>UDP-alpha-D-glucose</name>
        <dbReference type="ChEBI" id="CHEBI:58885"/>
    </ligand>
</feature>
<feature type="mutagenesis site" description="Decreases affinity for phloretin 2.9-fold and increases affinity for UDP-glucose 2-fold." evidence="3">
    <original>Y</original>
    <variation>F</variation>
    <location>
        <position position="102"/>
    </location>
</feature>
<feature type="mutagenesis site" description="Decreases affinity for phloretin 2.1-fold and affinity for UDP-glucose 1.5-fold." evidence="3">
    <original>F</original>
    <variation>A</variation>
    <location>
        <position position="130"/>
    </location>
</feature>
<feature type="mutagenesis site" description="Decreases affinity for phloretin 2.7-fold and increases affinity for UDP-glucose 1.2-fold." evidence="3">
    <original>T</original>
    <variation>A</variation>
    <location>
        <position position="150"/>
    </location>
</feature>
<feature type="mutagenesis site" description="Decreases affinity for phloretin 2-fold and affinity for UDP-glucose 4.9-fold." evidence="3">
    <original>T</original>
    <variation>A</variation>
    <location>
        <position position="151"/>
    </location>
</feature>
<feature type="mutagenesis site" description="Decreases affinity for phloretin 6.4-fold and increases affinity for UDP-glucose 1.4-fold." evidence="3">
    <original>F</original>
    <variation>A</variation>
    <location>
        <position position="198"/>
    </location>
</feature>
<feature type="mutagenesis site" description="Decreases affinity for phloretin 2.8-fold and affinity for UDP-glucose 1.2-fold." evidence="3">
    <original>D</original>
    <variation>E</variation>
    <location>
        <position position="382"/>
    </location>
</feature>
<feature type="mutagenesis site" description="Decreases affinity for phloretin 3.5-fold and affinity for UDP-glucose 3.6-fold." evidence="3">
    <original>Q</original>
    <variation>A</variation>
    <location>
        <position position="383"/>
    </location>
</feature>
<feature type="mutagenesis site" description="Decreases affinity for phloretin 3.7-fold and affinity for UDP-glucose 2.1-fold." evidence="3">
    <original>Q</original>
    <variation>H</variation>
    <location>
        <position position="383"/>
    </location>
</feature>
<feature type="strand" evidence="11">
    <location>
        <begin position="21"/>
        <end position="25"/>
    </location>
</feature>
<feature type="helix" evidence="11">
    <location>
        <begin position="30"/>
        <end position="44"/>
    </location>
</feature>
<feature type="turn" evidence="11">
    <location>
        <begin position="46"/>
        <end position="48"/>
    </location>
</feature>
<feature type="strand" evidence="11">
    <location>
        <begin position="51"/>
        <end position="59"/>
    </location>
</feature>
<feature type="helix" evidence="11">
    <location>
        <begin position="63"/>
        <end position="75"/>
    </location>
</feature>
<feature type="strand" evidence="11">
    <location>
        <begin position="79"/>
        <end position="85"/>
    </location>
</feature>
<feature type="strand" evidence="11">
    <location>
        <begin position="93"/>
        <end position="95"/>
    </location>
</feature>
<feature type="helix" evidence="11">
    <location>
        <begin position="97"/>
        <end position="108"/>
    </location>
</feature>
<feature type="helix" evidence="11">
    <location>
        <begin position="109"/>
        <end position="111"/>
    </location>
</feature>
<feature type="helix" evidence="11">
    <location>
        <begin position="112"/>
        <end position="117"/>
    </location>
</feature>
<feature type="strand" evidence="11">
    <location>
        <begin position="119"/>
        <end position="121"/>
    </location>
</feature>
<feature type="strand" evidence="11">
    <location>
        <begin position="123"/>
        <end position="128"/>
    </location>
</feature>
<feature type="helix" evidence="11">
    <location>
        <begin position="130"/>
        <end position="132"/>
    </location>
</feature>
<feature type="helix" evidence="11">
    <location>
        <begin position="133"/>
        <end position="138"/>
    </location>
</feature>
<feature type="strand" evidence="11">
    <location>
        <begin position="139"/>
        <end position="141"/>
    </location>
</feature>
<feature type="strand" evidence="11">
    <location>
        <begin position="145"/>
        <end position="151"/>
    </location>
</feature>
<feature type="helix" evidence="11">
    <location>
        <begin position="153"/>
        <end position="161"/>
    </location>
</feature>
<feature type="helix" evidence="11">
    <location>
        <begin position="162"/>
        <end position="164"/>
    </location>
</feature>
<feature type="strand" evidence="10">
    <location>
        <begin position="170"/>
        <end position="172"/>
    </location>
</feature>
<feature type="helix" evidence="11">
    <location>
        <begin position="184"/>
        <end position="186"/>
    </location>
</feature>
<feature type="helix" evidence="11">
    <location>
        <begin position="189"/>
        <end position="192"/>
    </location>
</feature>
<feature type="helix" evidence="11">
    <location>
        <begin position="197"/>
        <end position="206"/>
    </location>
</feature>
<feature type="helix" evidence="11">
    <location>
        <begin position="207"/>
        <end position="211"/>
    </location>
</feature>
<feature type="strand" evidence="11">
    <location>
        <begin position="212"/>
        <end position="218"/>
    </location>
</feature>
<feature type="turn" evidence="11">
    <location>
        <begin position="221"/>
        <end position="223"/>
    </location>
</feature>
<feature type="helix" evidence="11">
    <location>
        <begin position="225"/>
        <end position="232"/>
    </location>
</feature>
<feature type="strand" evidence="11">
    <location>
        <begin position="234"/>
        <end position="237"/>
    </location>
</feature>
<feature type="strand" evidence="11">
    <location>
        <begin position="243"/>
        <end position="245"/>
    </location>
</feature>
<feature type="helix" evidence="11">
    <location>
        <begin position="261"/>
        <end position="265"/>
    </location>
</feature>
<feature type="strand" evidence="11">
    <location>
        <begin position="272"/>
        <end position="276"/>
    </location>
</feature>
<feature type="helix" evidence="11">
    <location>
        <begin position="285"/>
        <end position="298"/>
    </location>
</feature>
<feature type="strand" evidence="11">
    <location>
        <begin position="301"/>
        <end position="305"/>
    </location>
</feature>
<feature type="helix" evidence="11">
    <location>
        <begin position="317"/>
        <end position="323"/>
    </location>
</feature>
<feature type="helix" evidence="11">
    <location>
        <begin position="325"/>
        <end position="334"/>
    </location>
</feature>
<feature type="strand" evidence="11">
    <location>
        <begin position="335"/>
        <end position="339"/>
    </location>
</feature>
<feature type="helix" evidence="11">
    <location>
        <begin position="343"/>
        <end position="347"/>
    </location>
</feature>
<feature type="strand" evidence="11">
    <location>
        <begin position="352"/>
        <end position="357"/>
    </location>
</feature>
<feature type="helix" evidence="11">
    <location>
        <begin position="361"/>
        <end position="370"/>
    </location>
</feature>
<feature type="strand" evidence="11">
    <location>
        <begin position="374"/>
        <end position="376"/>
    </location>
</feature>
<feature type="helix" evidence="11">
    <location>
        <begin position="383"/>
        <end position="392"/>
    </location>
</feature>
<feature type="strand" evidence="11">
    <location>
        <begin position="395"/>
        <end position="398"/>
    </location>
</feature>
<feature type="helix" evidence="11">
    <location>
        <begin position="402"/>
        <end position="404"/>
    </location>
</feature>
<feature type="helix" evidence="11">
    <location>
        <begin position="406"/>
        <end position="418"/>
    </location>
</feature>
<feature type="strand" evidence="11">
    <location>
        <begin position="419"/>
        <end position="421"/>
    </location>
</feature>
<feature type="helix" evidence="11">
    <location>
        <begin position="422"/>
        <end position="438"/>
    </location>
</feature>
<feature type="helix" evidence="11">
    <location>
        <begin position="443"/>
        <end position="454"/>
    </location>
</feature>